<evidence type="ECO:0000255" key="1">
    <source>
        <dbReference type="HAMAP-Rule" id="MF_00298"/>
    </source>
</evidence>
<comment type="function">
    <text evidence="1">Accelerates the degradation of transcripts by removing pyrophosphate from the 5'-end of triphosphorylated RNA, leading to a more labile monophosphorylated state that can stimulate subsequent ribonuclease cleavage.</text>
</comment>
<comment type="cofactor">
    <cofactor evidence="1">
        <name>a divalent metal cation</name>
        <dbReference type="ChEBI" id="CHEBI:60240"/>
    </cofactor>
</comment>
<comment type="similarity">
    <text evidence="1">Belongs to the Nudix hydrolase family. RppH subfamily.</text>
</comment>
<accession>A7H3U9</accession>
<reference key="1">
    <citation type="submission" date="2007-07" db="EMBL/GenBank/DDBJ databases">
        <title>Complete genome sequence of Campylobacter jejuni subsp doylei 269.97 isolated from human blood.</title>
        <authorList>
            <person name="Fouts D.E."/>
            <person name="Mongodin E.F."/>
            <person name="Puiu D."/>
            <person name="Sebastian Y."/>
            <person name="Miller W.G."/>
            <person name="Mandrell R.E."/>
            <person name="Lastovica A.J."/>
            <person name="Nelson K.E."/>
        </authorList>
    </citation>
    <scope>NUCLEOTIDE SEQUENCE [LARGE SCALE GENOMIC DNA]</scope>
    <source>
        <strain>ATCC BAA-1458 / RM4099 / 269.97</strain>
    </source>
</reference>
<proteinExistence type="inferred from homology"/>
<keyword id="KW-0378">Hydrolase</keyword>
<dbReference type="EC" id="3.6.1.-" evidence="1"/>
<dbReference type="EMBL" id="CP000768">
    <property type="protein sequence ID" value="ABS44569.1"/>
    <property type="molecule type" value="Genomic_DNA"/>
</dbReference>
<dbReference type="SMR" id="A7H3U9"/>
<dbReference type="KEGG" id="cjd:JJD26997_1088"/>
<dbReference type="HOGENOM" id="CLU_087195_3_0_7"/>
<dbReference type="Proteomes" id="UP000002302">
    <property type="component" value="Chromosome"/>
</dbReference>
<dbReference type="GO" id="GO:0034432">
    <property type="term" value="F:bis(5'-adenosyl)-pentaphosphatase activity"/>
    <property type="evidence" value="ECO:0007669"/>
    <property type="project" value="TreeGrafter"/>
</dbReference>
<dbReference type="GO" id="GO:0008893">
    <property type="term" value="F:guanosine-3',5'-bis(diphosphate) 3'-diphosphatase activity"/>
    <property type="evidence" value="ECO:0007669"/>
    <property type="project" value="TreeGrafter"/>
</dbReference>
<dbReference type="GO" id="GO:0006753">
    <property type="term" value="P:nucleoside phosphate metabolic process"/>
    <property type="evidence" value="ECO:0007669"/>
    <property type="project" value="TreeGrafter"/>
</dbReference>
<dbReference type="GO" id="GO:0019693">
    <property type="term" value="P:ribose phosphate metabolic process"/>
    <property type="evidence" value="ECO:0007669"/>
    <property type="project" value="TreeGrafter"/>
</dbReference>
<dbReference type="CDD" id="cd03671">
    <property type="entry name" value="NUDIX_Ap4A_hydrolase_plant_like"/>
    <property type="match status" value="1"/>
</dbReference>
<dbReference type="Gene3D" id="3.90.79.10">
    <property type="entry name" value="Nucleoside Triphosphate Pyrophosphohydrolase"/>
    <property type="match status" value="1"/>
</dbReference>
<dbReference type="HAMAP" id="MF_00298">
    <property type="entry name" value="Nudix_RppH"/>
    <property type="match status" value="1"/>
</dbReference>
<dbReference type="InterPro" id="IPR020476">
    <property type="entry name" value="Nudix_hydrolase"/>
</dbReference>
<dbReference type="InterPro" id="IPR015797">
    <property type="entry name" value="NUDIX_hydrolase-like_dom_sf"/>
</dbReference>
<dbReference type="InterPro" id="IPR020084">
    <property type="entry name" value="NUDIX_hydrolase_CS"/>
</dbReference>
<dbReference type="InterPro" id="IPR000086">
    <property type="entry name" value="NUDIX_hydrolase_dom"/>
</dbReference>
<dbReference type="InterPro" id="IPR022927">
    <property type="entry name" value="RppH"/>
</dbReference>
<dbReference type="NCBIfam" id="NF001936">
    <property type="entry name" value="PRK00714.1-3"/>
    <property type="match status" value="1"/>
</dbReference>
<dbReference type="NCBIfam" id="NF001938">
    <property type="entry name" value="PRK00714.1-5"/>
    <property type="match status" value="1"/>
</dbReference>
<dbReference type="PANTHER" id="PTHR11839:SF22">
    <property type="entry name" value="NUDIX HYDROLASE 26, CHLOROPLASTIC"/>
    <property type="match status" value="1"/>
</dbReference>
<dbReference type="PANTHER" id="PTHR11839">
    <property type="entry name" value="UDP/ADP-SUGAR PYROPHOSPHATASE"/>
    <property type="match status" value="1"/>
</dbReference>
<dbReference type="Pfam" id="PF00293">
    <property type="entry name" value="NUDIX"/>
    <property type="match status" value="1"/>
</dbReference>
<dbReference type="PRINTS" id="PR00502">
    <property type="entry name" value="NUDIXFAMILY"/>
</dbReference>
<dbReference type="SUPFAM" id="SSF55811">
    <property type="entry name" value="Nudix"/>
    <property type="match status" value="1"/>
</dbReference>
<dbReference type="PROSITE" id="PS51462">
    <property type="entry name" value="NUDIX"/>
    <property type="match status" value="1"/>
</dbReference>
<dbReference type="PROSITE" id="PS00893">
    <property type="entry name" value="NUDIX_BOX"/>
    <property type="match status" value="1"/>
</dbReference>
<feature type="chain" id="PRO_1000078957" description="RNA pyrophosphohydrolase">
    <location>
        <begin position="1"/>
        <end position="156"/>
    </location>
</feature>
<feature type="domain" description="Nudix hydrolase" evidence="1">
    <location>
        <begin position="6"/>
        <end position="148"/>
    </location>
</feature>
<feature type="short sequence motif" description="Nudix box">
    <location>
        <begin position="43"/>
        <end position="64"/>
    </location>
</feature>
<gene>
    <name evidence="1" type="primary">rppH</name>
    <name evidence="1" type="synonym">nudH</name>
    <name type="ordered locus">JJD26997_1088</name>
</gene>
<organism>
    <name type="scientific">Campylobacter jejuni subsp. doylei (strain ATCC BAA-1458 / RM4099 / 269.97)</name>
    <dbReference type="NCBI Taxonomy" id="360109"/>
    <lineage>
        <taxon>Bacteria</taxon>
        <taxon>Pseudomonadati</taxon>
        <taxon>Campylobacterota</taxon>
        <taxon>Epsilonproteobacteria</taxon>
        <taxon>Campylobacterales</taxon>
        <taxon>Campylobacteraceae</taxon>
        <taxon>Campylobacter</taxon>
    </lineage>
</organism>
<name>RPPH_CAMJD</name>
<sequence length="156" mass="18470">MENEKNYRPNVAAIVLSSSYPFECKIFIAKRSDMDNIWQFPQGGIDKGESAKNALFRELKEEIGTDEVEIIAEYPEWLSYDFPGKIVKKMYPYDGQIQKYFLVRLKHGATININTKHPEFDDYQFVSVKQIFEMINHFKKNIYVKVIKYFEEKGYI</sequence>
<protein>
    <recommendedName>
        <fullName evidence="1">RNA pyrophosphohydrolase</fullName>
        <ecNumber evidence="1">3.6.1.-</ecNumber>
    </recommendedName>
    <alternativeName>
        <fullName evidence="1">(Di)nucleoside polyphosphate hydrolase</fullName>
    </alternativeName>
</protein>